<organism>
    <name type="scientific">Oryza sativa subsp. japonica</name>
    <name type="common">Rice</name>
    <dbReference type="NCBI Taxonomy" id="39947"/>
    <lineage>
        <taxon>Eukaryota</taxon>
        <taxon>Viridiplantae</taxon>
        <taxon>Streptophyta</taxon>
        <taxon>Embryophyta</taxon>
        <taxon>Tracheophyta</taxon>
        <taxon>Spermatophyta</taxon>
        <taxon>Magnoliopsida</taxon>
        <taxon>Liliopsida</taxon>
        <taxon>Poales</taxon>
        <taxon>Poaceae</taxon>
        <taxon>BOP clade</taxon>
        <taxon>Oryzoideae</taxon>
        <taxon>Oryzeae</taxon>
        <taxon>Oryzinae</taxon>
        <taxon>Oryza</taxon>
        <taxon>Oryza sativa</taxon>
    </lineage>
</organism>
<keyword id="KW-0106">Calcium</keyword>
<keyword id="KW-0407">Ion channel</keyword>
<keyword id="KW-0406">Ion transport</keyword>
<keyword id="KW-0472">Membrane</keyword>
<keyword id="KW-0479">Metal-binding</keyword>
<keyword id="KW-0630">Potassium</keyword>
<keyword id="KW-0631">Potassium channel</keyword>
<keyword id="KW-0633">Potassium transport</keyword>
<keyword id="KW-1185">Reference proteome</keyword>
<keyword id="KW-0677">Repeat</keyword>
<keyword id="KW-0812">Transmembrane</keyword>
<keyword id="KW-1133">Transmembrane helix</keyword>
<keyword id="KW-0813">Transport</keyword>
<evidence type="ECO:0000250" key="1"/>
<evidence type="ECO:0000255" key="2"/>
<evidence type="ECO:0000255" key="3">
    <source>
        <dbReference type="PROSITE-ProRule" id="PRU10142"/>
    </source>
</evidence>
<evidence type="ECO:0000256" key="4">
    <source>
        <dbReference type="SAM" id="MobiDB-lite"/>
    </source>
</evidence>
<evidence type="ECO:0000305" key="5"/>
<protein>
    <recommendedName>
        <fullName>Two pore potassium channel c</fullName>
        <shortName>Two K(+) channel c</shortName>
    </recommendedName>
    <alternativeName>
        <fullName>Calcium-activated outward-rectifying potassium channel 3</fullName>
        <shortName>OsKCO3</shortName>
    </alternativeName>
</protein>
<gene>
    <name type="primary">TPKC</name>
    <name type="synonym">KCO3</name>
    <name type="ordered locus">Os09g0299400</name>
    <name type="ordered locus">LOC_Os09g12790</name>
    <name type="ORF">OsJ_28764</name>
    <name type="ORF">OSJNBa0062A09.6</name>
</gene>
<name>KCO3_ORYSJ</name>
<feature type="chain" id="PRO_0000410874" description="Two pore potassium channel c">
    <location>
        <begin position="1"/>
        <end position="456"/>
    </location>
</feature>
<feature type="topological domain" description="Cytoplasmic" evidence="2">
    <location>
        <begin position="1"/>
        <end position="152"/>
    </location>
</feature>
<feature type="transmembrane region" description="Helical" evidence="2">
    <location>
        <begin position="153"/>
        <end position="173"/>
    </location>
</feature>
<feature type="intramembrane region" description="Pore-forming; Name=Pore-forming 1" evidence="2">
    <location>
        <begin position="192"/>
        <end position="211"/>
    </location>
</feature>
<feature type="transmembrane region" description="Helical" evidence="2">
    <location>
        <begin position="223"/>
        <end position="243"/>
    </location>
</feature>
<feature type="topological domain" description="Cytoplasmic" evidence="2">
    <location>
        <begin position="244"/>
        <end position="279"/>
    </location>
</feature>
<feature type="transmembrane region" description="Helical" evidence="2">
    <location>
        <begin position="280"/>
        <end position="300"/>
    </location>
</feature>
<feature type="intramembrane region" description="Pore-forming; Name=Pore-forming 2" evidence="2">
    <location>
        <begin position="310"/>
        <end position="329"/>
    </location>
</feature>
<feature type="transmembrane region" description="Helical" evidence="2">
    <location>
        <begin position="336"/>
        <end position="356"/>
    </location>
</feature>
<feature type="topological domain" description="Cytoplasmic" evidence="2">
    <location>
        <begin position="357"/>
        <end position="456"/>
    </location>
</feature>
<feature type="domain" description="EF-hand 1">
    <location>
        <begin position="373"/>
        <end position="408"/>
    </location>
</feature>
<feature type="domain" description="EF-hand 2">
    <location>
        <begin position="412"/>
        <end position="447"/>
    </location>
</feature>
<feature type="region of interest" description="Disordered" evidence="4">
    <location>
        <begin position="1"/>
        <end position="112"/>
    </location>
</feature>
<feature type="compositionally biased region" description="Low complexity" evidence="4">
    <location>
        <begin position="1"/>
        <end position="19"/>
    </location>
</feature>
<feature type="compositionally biased region" description="Pro residues" evidence="4">
    <location>
        <begin position="52"/>
        <end position="67"/>
    </location>
</feature>
<feature type="binding site" evidence="3">
    <location>
        <position position="386"/>
    </location>
    <ligand>
        <name>Ca(2+)</name>
        <dbReference type="ChEBI" id="CHEBI:29108"/>
        <label>1</label>
    </ligand>
</feature>
<feature type="binding site" evidence="3">
    <location>
        <position position="388"/>
    </location>
    <ligand>
        <name>Ca(2+)</name>
        <dbReference type="ChEBI" id="CHEBI:29108"/>
        <label>1</label>
    </ligand>
</feature>
<feature type="binding site" evidence="3">
    <location>
        <position position="390"/>
    </location>
    <ligand>
        <name>Ca(2+)</name>
        <dbReference type="ChEBI" id="CHEBI:29108"/>
        <label>1</label>
    </ligand>
</feature>
<feature type="binding site" evidence="3">
    <location>
        <position position="392"/>
    </location>
    <ligand>
        <name>Ca(2+)</name>
        <dbReference type="ChEBI" id="CHEBI:29108"/>
        <label>1</label>
    </ligand>
</feature>
<feature type="binding site" evidence="3">
    <location>
        <position position="397"/>
    </location>
    <ligand>
        <name>Ca(2+)</name>
        <dbReference type="ChEBI" id="CHEBI:29108"/>
        <label>1</label>
    </ligand>
</feature>
<feature type="binding site" evidence="5">
    <location>
        <position position="425"/>
    </location>
    <ligand>
        <name>Ca(2+)</name>
        <dbReference type="ChEBI" id="CHEBI:29108"/>
        <label>2</label>
    </ligand>
</feature>
<feature type="binding site" evidence="5">
    <location>
        <position position="431"/>
    </location>
    <ligand>
        <name>Ca(2+)</name>
        <dbReference type="ChEBI" id="CHEBI:29108"/>
        <label>2</label>
    </ligand>
</feature>
<feature type="binding site" evidence="5">
    <location>
        <position position="436"/>
    </location>
    <ligand>
        <name>Ca(2+)</name>
        <dbReference type="ChEBI" id="CHEBI:29108"/>
        <label>2</label>
    </ligand>
</feature>
<reference key="1">
    <citation type="journal article" date="2005" name="Nature">
        <title>The map-based sequence of the rice genome.</title>
        <authorList>
            <consortium name="International rice genome sequencing project (IRGSP)"/>
        </authorList>
    </citation>
    <scope>NUCLEOTIDE SEQUENCE [LARGE SCALE GENOMIC DNA]</scope>
    <source>
        <strain>cv. Nipponbare</strain>
    </source>
</reference>
<reference key="2">
    <citation type="journal article" date="2008" name="Nucleic Acids Res.">
        <title>The rice annotation project database (RAP-DB): 2008 update.</title>
        <authorList>
            <consortium name="The rice annotation project (RAP)"/>
        </authorList>
    </citation>
    <scope>GENOME REANNOTATION</scope>
    <source>
        <strain>cv. Nipponbare</strain>
    </source>
</reference>
<reference key="3">
    <citation type="journal article" date="2013" name="Rice">
        <title>Improvement of the Oryza sativa Nipponbare reference genome using next generation sequence and optical map data.</title>
        <authorList>
            <person name="Kawahara Y."/>
            <person name="de la Bastide M."/>
            <person name="Hamilton J.P."/>
            <person name="Kanamori H."/>
            <person name="McCombie W.R."/>
            <person name="Ouyang S."/>
            <person name="Schwartz D.C."/>
            <person name="Tanaka T."/>
            <person name="Wu J."/>
            <person name="Zhou S."/>
            <person name="Childs K.L."/>
            <person name="Davidson R.M."/>
            <person name="Lin H."/>
            <person name="Quesada-Ocampo L."/>
            <person name="Vaillancourt B."/>
            <person name="Sakai H."/>
            <person name="Lee S.S."/>
            <person name="Kim J."/>
            <person name="Numa H."/>
            <person name="Itoh T."/>
            <person name="Buell C.R."/>
            <person name="Matsumoto T."/>
        </authorList>
    </citation>
    <scope>GENOME REANNOTATION</scope>
    <source>
        <strain>cv. Nipponbare</strain>
    </source>
</reference>
<reference key="4">
    <citation type="journal article" date="2005" name="PLoS Biol.">
        <title>The genomes of Oryza sativa: a history of duplications.</title>
        <authorList>
            <person name="Yu J."/>
            <person name="Wang J."/>
            <person name="Lin W."/>
            <person name="Li S."/>
            <person name="Li H."/>
            <person name="Zhou J."/>
            <person name="Ni P."/>
            <person name="Dong W."/>
            <person name="Hu S."/>
            <person name="Zeng C."/>
            <person name="Zhang J."/>
            <person name="Zhang Y."/>
            <person name="Li R."/>
            <person name="Xu Z."/>
            <person name="Li S."/>
            <person name="Li X."/>
            <person name="Zheng H."/>
            <person name="Cong L."/>
            <person name="Lin L."/>
            <person name="Yin J."/>
            <person name="Geng J."/>
            <person name="Li G."/>
            <person name="Shi J."/>
            <person name="Liu J."/>
            <person name="Lv H."/>
            <person name="Li J."/>
            <person name="Wang J."/>
            <person name="Deng Y."/>
            <person name="Ran L."/>
            <person name="Shi X."/>
            <person name="Wang X."/>
            <person name="Wu Q."/>
            <person name="Li C."/>
            <person name="Ren X."/>
            <person name="Wang J."/>
            <person name="Wang X."/>
            <person name="Li D."/>
            <person name="Liu D."/>
            <person name="Zhang X."/>
            <person name="Ji Z."/>
            <person name="Zhao W."/>
            <person name="Sun Y."/>
            <person name="Zhang Z."/>
            <person name="Bao J."/>
            <person name="Han Y."/>
            <person name="Dong L."/>
            <person name="Ji J."/>
            <person name="Chen P."/>
            <person name="Wu S."/>
            <person name="Liu J."/>
            <person name="Xiao Y."/>
            <person name="Bu D."/>
            <person name="Tan J."/>
            <person name="Yang L."/>
            <person name="Ye C."/>
            <person name="Zhang J."/>
            <person name="Xu J."/>
            <person name="Zhou Y."/>
            <person name="Yu Y."/>
            <person name="Zhang B."/>
            <person name="Zhuang S."/>
            <person name="Wei H."/>
            <person name="Liu B."/>
            <person name="Lei M."/>
            <person name="Yu H."/>
            <person name="Li Y."/>
            <person name="Xu H."/>
            <person name="Wei S."/>
            <person name="He X."/>
            <person name="Fang L."/>
            <person name="Zhang Z."/>
            <person name="Zhang Y."/>
            <person name="Huang X."/>
            <person name="Su Z."/>
            <person name="Tong W."/>
            <person name="Li J."/>
            <person name="Tong Z."/>
            <person name="Li S."/>
            <person name="Ye J."/>
            <person name="Wang L."/>
            <person name="Fang L."/>
            <person name="Lei T."/>
            <person name="Chen C.-S."/>
            <person name="Chen H.-C."/>
            <person name="Xu Z."/>
            <person name="Li H."/>
            <person name="Huang H."/>
            <person name="Zhang F."/>
            <person name="Xu H."/>
            <person name="Li N."/>
            <person name="Zhao C."/>
            <person name="Li S."/>
            <person name="Dong L."/>
            <person name="Huang Y."/>
            <person name="Li L."/>
            <person name="Xi Y."/>
            <person name="Qi Q."/>
            <person name="Li W."/>
            <person name="Zhang B."/>
            <person name="Hu W."/>
            <person name="Zhang Y."/>
            <person name="Tian X."/>
            <person name="Jiao Y."/>
            <person name="Liang X."/>
            <person name="Jin J."/>
            <person name="Gao L."/>
            <person name="Zheng W."/>
            <person name="Hao B."/>
            <person name="Liu S.-M."/>
            <person name="Wang W."/>
            <person name="Yuan L."/>
            <person name="Cao M."/>
            <person name="McDermott J."/>
            <person name="Samudrala R."/>
            <person name="Wang J."/>
            <person name="Wong G.K.-S."/>
            <person name="Yang H."/>
        </authorList>
    </citation>
    <scope>NUCLEOTIDE SEQUENCE [LARGE SCALE GENOMIC DNA]</scope>
    <source>
        <strain>cv. Nipponbare</strain>
    </source>
</reference>
<proteinExistence type="inferred from homology"/>
<dbReference type="EMBL" id="AP004736">
    <property type="protein sequence ID" value="BAD33183.1"/>
    <property type="molecule type" value="Genomic_DNA"/>
</dbReference>
<dbReference type="EMBL" id="AP008215">
    <property type="protein sequence ID" value="BAF24728.1"/>
    <property type="status" value="ALT_SEQ"/>
    <property type="molecule type" value="Genomic_DNA"/>
</dbReference>
<dbReference type="EMBL" id="AP014965">
    <property type="protein sequence ID" value="BAT07337.1"/>
    <property type="molecule type" value="Genomic_DNA"/>
</dbReference>
<dbReference type="EMBL" id="CM000146">
    <property type="protein sequence ID" value="EAZ44138.1"/>
    <property type="molecule type" value="Genomic_DNA"/>
</dbReference>
<dbReference type="RefSeq" id="XP_015651429.1">
    <property type="nucleotide sequence ID" value="XM_015795943.1"/>
</dbReference>
<dbReference type="SMR" id="Q69TN4"/>
<dbReference type="FunCoup" id="Q69TN4">
    <property type="interactions" value="1875"/>
</dbReference>
<dbReference type="STRING" id="39947.Q69TN4"/>
<dbReference type="PaxDb" id="39947-Q69TN4"/>
<dbReference type="EnsemblPlants" id="Os09t0299400-00">
    <property type="protein sequence ID" value="Os09t0299400-00"/>
    <property type="gene ID" value="Os09g0299400"/>
</dbReference>
<dbReference type="Gramene" id="Os09t0299400-00">
    <property type="protein sequence ID" value="Os09t0299400-00"/>
    <property type="gene ID" value="Os09g0299400"/>
</dbReference>
<dbReference type="KEGG" id="dosa:Os09g0299400"/>
<dbReference type="eggNOG" id="KOG1418">
    <property type="taxonomic scope" value="Eukaryota"/>
</dbReference>
<dbReference type="HOGENOM" id="CLU_033675_2_0_1"/>
<dbReference type="InParanoid" id="Q69TN4"/>
<dbReference type="OMA" id="WLIDPNY"/>
<dbReference type="OrthoDB" id="415460at2759"/>
<dbReference type="Proteomes" id="UP000000763">
    <property type="component" value="Chromosome 9"/>
</dbReference>
<dbReference type="Proteomes" id="UP000007752">
    <property type="component" value="Chromosome 9"/>
</dbReference>
<dbReference type="Proteomes" id="UP000059680">
    <property type="component" value="Chromosome 9"/>
</dbReference>
<dbReference type="GO" id="GO:0009705">
    <property type="term" value="C:plant-type vacuole membrane"/>
    <property type="evidence" value="ECO:0000318"/>
    <property type="project" value="GO_Central"/>
</dbReference>
<dbReference type="GO" id="GO:0005886">
    <property type="term" value="C:plasma membrane"/>
    <property type="evidence" value="ECO:0000318"/>
    <property type="project" value="GO_Central"/>
</dbReference>
<dbReference type="GO" id="GO:0046872">
    <property type="term" value="F:metal ion binding"/>
    <property type="evidence" value="ECO:0007669"/>
    <property type="project" value="UniProtKB-KW"/>
</dbReference>
<dbReference type="GO" id="GO:0015271">
    <property type="term" value="F:outward rectifier potassium channel activity"/>
    <property type="evidence" value="ECO:0000318"/>
    <property type="project" value="GO_Central"/>
</dbReference>
<dbReference type="GO" id="GO:0022841">
    <property type="term" value="F:potassium ion leak channel activity"/>
    <property type="evidence" value="ECO:0000318"/>
    <property type="project" value="GO_Central"/>
</dbReference>
<dbReference type="GO" id="GO:0071805">
    <property type="term" value="P:potassium ion transmembrane transport"/>
    <property type="evidence" value="ECO:0000318"/>
    <property type="project" value="GO_Central"/>
</dbReference>
<dbReference type="FunFam" id="1.10.287.70:FF:000150">
    <property type="entry name" value="Two pore potassium channel c"/>
    <property type="match status" value="1"/>
</dbReference>
<dbReference type="FunFam" id="1.10.287.70:FF:000102">
    <property type="entry name" value="Two-pore potassium channel 3"/>
    <property type="match status" value="1"/>
</dbReference>
<dbReference type="Gene3D" id="1.10.287.70">
    <property type="match status" value="2"/>
</dbReference>
<dbReference type="Gene3D" id="1.10.238.10">
    <property type="entry name" value="EF-hand"/>
    <property type="match status" value="1"/>
</dbReference>
<dbReference type="InterPro" id="IPR003280">
    <property type="entry name" value="2pore_dom_K_chnl"/>
</dbReference>
<dbReference type="InterPro" id="IPR011992">
    <property type="entry name" value="EF-hand-dom_pair"/>
</dbReference>
<dbReference type="InterPro" id="IPR018247">
    <property type="entry name" value="EF_Hand_1_Ca_BS"/>
</dbReference>
<dbReference type="InterPro" id="IPR013099">
    <property type="entry name" value="K_chnl_dom"/>
</dbReference>
<dbReference type="PANTHER" id="PTHR11003">
    <property type="entry name" value="POTASSIUM CHANNEL, SUBFAMILY K"/>
    <property type="match status" value="1"/>
</dbReference>
<dbReference type="PANTHER" id="PTHR11003:SF282">
    <property type="entry name" value="TWO-PORE POTASSIUM CHANNEL 3"/>
    <property type="match status" value="1"/>
</dbReference>
<dbReference type="Pfam" id="PF07885">
    <property type="entry name" value="Ion_trans_2"/>
    <property type="match status" value="2"/>
</dbReference>
<dbReference type="PRINTS" id="PR01333">
    <property type="entry name" value="2POREKCHANEL"/>
</dbReference>
<dbReference type="SUPFAM" id="SSF47473">
    <property type="entry name" value="EF-hand"/>
    <property type="match status" value="1"/>
</dbReference>
<dbReference type="SUPFAM" id="SSF101447">
    <property type="entry name" value="Formin homology 2 domain (FH2 domain)"/>
    <property type="match status" value="1"/>
</dbReference>
<dbReference type="SUPFAM" id="SSF81324">
    <property type="entry name" value="Voltage-gated potassium channels"/>
    <property type="match status" value="2"/>
</dbReference>
<dbReference type="PROSITE" id="PS00018">
    <property type="entry name" value="EF_HAND_1"/>
    <property type="match status" value="1"/>
</dbReference>
<sequence>MDTEPLLSPLSPSPHLLHPLPEHAEVSTFSPPLSPCPSPASSYKERIIFGAHPPPPPPPPPPPPPPPRGRRYYRRVSGDDLDVPSCSSSPSPPSDEENPPPNPPSLFDFIGGRTNLHRSRTAPAMAPLNAAAIAAAAASGDSRNPPPPPRRPAIVLHAFLFLLAYLAMGVTFYAALPGNFTSSAGPTHPVADALYFCIVTLCTIGYGDITPATPAAKLFSISFVLIGFGFVDILLSGMVSYVLDLQEHLLITALKNPRSVRKHRHNYIFDLKKGRMRVRMKVALALTVVAICVGVGAAVLKRVENLGWLDAVYLAVMSVTTVGYGDHAFRTLAGRLFASAWLLVSTLAVARAFLYLAEMRIDKRHRAMANWVLSRDMTVSEFLAADIDNNGYVTKSEFVVYKLKEMGKISEKDIMMICDQFQRMDSGNCGKITLSDLLESHQLVTDLNEKKKGKKS</sequence>
<comment type="function">
    <text evidence="1">Inward-rectifying potassium channel.</text>
</comment>
<comment type="subunit">
    <text evidence="5">Homodimer.</text>
</comment>
<comment type="subcellular location">
    <subcellularLocation>
        <location evidence="5">Membrane</location>
        <topology evidence="5">Multi-pass membrane protein</topology>
    </subcellularLocation>
</comment>
<comment type="domain">
    <text>Each of the two pore-forming region (also called P-domain or P-loop) is enclosed by two transmembrane segments (2P/4TM) and contains the GYGD signature motif which seems to be involved in potassium selectivity.</text>
</comment>
<comment type="similarity">
    <text evidence="5">Belongs to the two pore domain potassium channel (TC 1.A.1.7) family.</text>
</comment>
<comment type="sequence caution" evidence="5">
    <conflict type="erroneous gene model prediction">
        <sequence resource="EMBL-CDS" id="BAF24728"/>
    </conflict>
</comment>
<accession>Q69TN4</accession>
<accession>A0A0P0XKR3</accession>
<accession>Q0J2T7</accession>